<comment type="function">
    <text evidence="1">Catalyzes the radical-mediated synthesis of 7,8-didemethyl-8-hydroxy-5-deazariboflavin from 5-amino-5-(4-hydroxybenzyl)-6-(D-ribitylimino)-5,6-dihydrouracil.</text>
</comment>
<comment type="catalytic activity">
    <reaction evidence="1">
        <text>5-amino-5-(4-hydroxybenzyl)-6-(D-ribitylimino)-5,6-dihydrouracil + S-adenosyl-L-methionine = 7,8-didemethyl-8-hydroxy-5-deazariboflavin + 5'-deoxyadenosine + L-methionine + NH4(+) + H(+)</text>
        <dbReference type="Rhea" id="RHEA:55204"/>
        <dbReference type="ChEBI" id="CHEBI:15378"/>
        <dbReference type="ChEBI" id="CHEBI:17319"/>
        <dbReference type="ChEBI" id="CHEBI:28938"/>
        <dbReference type="ChEBI" id="CHEBI:57844"/>
        <dbReference type="ChEBI" id="CHEBI:59789"/>
        <dbReference type="ChEBI" id="CHEBI:59904"/>
        <dbReference type="ChEBI" id="CHEBI:85936"/>
        <dbReference type="EC" id="4.3.1.32"/>
    </reaction>
</comment>
<comment type="cofactor">
    <cofactor evidence="1">
        <name>[4Fe-4S] cluster</name>
        <dbReference type="ChEBI" id="CHEBI:49883"/>
    </cofactor>
    <text evidence="1">Binds 1 [4Fe-4S] cluster. The cluster is coordinated with 3 cysteines and an exchangeable S-adenosyl-L-methionine.</text>
</comment>
<comment type="pathway">
    <text evidence="1">Cofactor biosynthesis; coenzyme F0 biosynthesis.</text>
</comment>
<comment type="subunit">
    <text evidence="1">Consists of two subunits, CofG and CofH.</text>
</comment>
<comment type="similarity">
    <text evidence="1">Belongs to the radical SAM superfamily. CofG family.</text>
</comment>
<dbReference type="EC" id="4.3.1.32" evidence="1"/>
<dbReference type="EMBL" id="CP000393">
    <property type="protein sequence ID" value="ABG49665.1"/>
    <property type="molecule type" value="Genomic_DNA"/>
</dbReference>
<dbReference type="RefSeq" id="WP_011610063.1">
    <property type="nucleotide sequence ID" value="NC_008312.1"/>
</dbReference>
<dbReference type="SMR" id="Q11A09"/>
<dbReference type="STRING" id="203124.Tery_0173"/>
<dbReference type="KEGG" id="ter:Tery_0173"/>
<dbReference type="eggNOG" id="COG1060">
    <property type="taxonomic scope" value="Bacteria"/>
</dbReference>
<dbReference type="HOGENOM" id="CLU_054174_0_0_3"/>
<dbReference type="OrthoDB" id="9802027at2"/>
<dbReference type="UniPathway" id="UPA00072"/>
<dbReference type="GO" id="GO:0051539">
    <property type="term" value="F:4 iron, 4 sulfur cluster binding"/>
    <property type="evidence" value="ECO:0007669"/>
    <property type="project" value="UniProtKB-KW"/>
</dbReference>
<dbReference type="GO" id="GO:0044689">
    <property type="term" value="F:7,8-didemethyl-8-hydroxy-5-deazariboflavin synthase activity"/>
    <property type="evidence" value="ECO:0007669"/>
    <property type="project" value="UniProtKB-EC"/>
</dbReference>
<dbReference type="GO" id="GO:0005506">
    <property type="term" value="F:iron ion binding"/>
    <property type="evidence" value="ECO:0007669"/>
    <property type="project" value="UniProtKB-UniRule"/>
</dbReference>
<dbReference type="GO" id="GO:0016765">
    <property type="term" value="F:transferase activity, transferring alkyl or aryl (other than methyl) groups"/>
    <property type="evidence" value="ECO:0007669"/>
    <property type="project" value="InterPro"/>
</dbReference>
<dbReference type="CDD" id="cd01335">
    <property type="entry name" value="Radical_SAM"/>
    <property type="match status" value="1"/>
</dbReference>
<dbReference type="Gene3D" id="3.20.20.70">
    <property type="entry name" value="Aldolase class I"/>
    <property type="match status" value="1"/>
</dbReference>
<dbReference type="HAMAP" id="MF_01611">
    <property type="entry name" value="FO_synth_sub1"/>
    <property type="match status" value="1"/>
</dbReference>
<dbReference type="InterPro" id="IPR013785">
    <property type="entry name" value="Aldolase_TIM"/>
</dbReference>
<dbReference type="InterPro" id="IPR019939">
    <property type="entry name" value="CofG_family"/>
</dbReference>
<dbReference type="InterPro" id="IPR006638">
    <property type="entry name" value="Elp3/MiaA/NifB-like_rSAM"/>
</dbReference>
<dbReference type="InterPro" id="IPR034405">
    <property type="entry name" value="F420"/>
</dbReference>
<dbReference type="InterPro" id="IPR007197">
    <property type="entry name" value="rSAM"/>
</dbReference>
<dbReference type="NCBIfam" id="TIGR03550">
    <property type="entry name" value="F420_cofG"/>
    <property type="match status" value="1"/>
</dbReference>
<dbReference type="NCBIfam" id="NF004884">
    <property type="entry name" value="PRK06245.1"/>
    <property type="match status" value="1"/>
</dbReference>
<dbReference type="PANTHER" id="PTHR43076:SF15">
    <property type="entry name" value="7,8-DIDEMETHYL-8-HYDROXY-5-DEAZARIBOFLAVIN SYNTHASE"/>
    <property type="match status" value="1"/>
</dbReference>
<dbReference type="PANTHER" id="PTHR43076">
    <property type="entry name" value="FO SYNTHASE (COFH)"/>
    <property type="match status" value="1"/>
</dbReference>
<dbReference type="Pfam" id="PF04055">
    <property type="entry name" value="Radical_SAM"/>
    <property type="match status" value="1"/>
</dbReference>
<dbReference type="SFLD" id="SFLDF00294">
    <property type="entry name" value="7_8-didemethyl-8-hydroxy-5-dea"/>
    <property type="match status" value="1"/>
</dbReference>
<dbReference type="SFLD" id="SFLDG01064">
    <property type="entry name" value="F420__menaquinone_cofactor_bio"/>
    <property type="match status" value="1"/>
</dbReference>
<dbReference type="SMART" id="SM00729">
    <property type="entry name" value="Elp3"/>
    <property type="match status" value="1"/>
</dbReference>
<dbReference type="SUPFAM" id="SSF102114">
    <property type="entry name" value="Radical SAM enzymes"/>
    <property type="match status" value="1"/>
</dbReference>
<dbReference type="PROSITE" id="PS51918">
    <property type="entry name" value="RADICAL_SAM"/>
    <property type="match status" value="1"/>
</dbReference>
<proteinExistence type="inferred from homology"/>
<reference key="1">
    <citation type="journal article" date="2015" name="Proc. Natl. Acad. Sci. U.S.A.">
        <title>Trichodesmium genome maintains abundant, widespread noncoding DNA in situ, despite oligotrophic lifestyle.</title>
        <authorList>
            <person name="Walworth N."/>
            <person name="Pfreundt U."/>
            <person name="Nelson W.C."/>
            <person name="Mincer T."/>
            <person name="Heidelberg J.F."/>
            <person name="Fu F."/>
            <person name="Waterbury J.B."/>
            <person name="Glavina del Rio T."/>
            <person name="Goodwin L."/>
            <person name="Kyrpides N.C."/>
            <person name="Land M.L."/>
            <person name="Woyke T."/>
            <person name="Hutchins D.A."/>
            <person name="Hess W.R."/>
            <person name="Webb E.A."/>
        </authorList>
    </citation>
    <scope>NUCLEOTIDE SEQUENCE [LARGE SCALE GENOMIC DNA]</scope>
    <source>
        <strain>IMS101</strain>
    </source>
</reference>
<feature type="chain" id="PRO_0000291711" description="7,8-didemethyl-8-hydroxy-5-deazariboflavin synthase">
    <location>
        <begin position="1"/>
        <end position="319"/>
    </location>
</feature>
<feature type="domain" description="Radical SAM core" evidence="2">
    <location>
        <begin position="5"/>
        <end position="236"/>
    </location>
</feature>
<feature type="binding site" evidence="1">
    <location>
        <position position="19"/>
    </location>
    <ligand>
        <name>[4Fe-4S] cluster</name>
        <dbReference type="ChEBI" id="CHEBI:49883"/>
        <note>4Fe-4S-S-AdoMet</note>
    </ligand>
</feature>
<feature type="binding site" evidence="1">
    <location>
        <position position="23"/>
    </location>
    <ligand>
        <name>[4Fe-4S] cluster</name>
        <dbReference type="ChEBI" id="CHEBI:49883"/>
        <note>4Fe-4S-S-AdoMet</note>
    </ligand>
</feature>
<feature type="binding site" evidence="1">
    <location>
        <position position="26"/>
    </location>
    <ligand>
        <name>[4Fe-4S] cluster</name>
        <dbReference type="ChEBI" id="CHEBI:49883"/>
        <note>4Fe-4S-S-AdoMet</note>
    </ligand>
</feature>
<protein>
    <recommendedName>
        <fullName evidence="1">7,8-didemethyl-8-hydroxy-5-deazariboflavin synthase</fullName>
        <ecNumber evidence="1">4.3.1.32</ecNumber>
    </recommendedName>
    <alternativeName>
        <fullName evidence="1">FO synthase subunit 1</fullName>
    </alternativeName>
</protein>
<gene>
    <name evidence="1" type="primary">cofG</name>
    <name type="ordered locus">Tery_0173</name>
</gene>
<organism>
    <name type="scientific">Trichodesmium erythraeum (strain IMS101)</name>
    <dbReference type="NCBI Taxonomy" id="203124"/>
    <lineage>
        <taxon>Bacteria</taxon>
        <taxon>Bacillati</taxon>
        <taxon>Cyanobacteriota</taxon>
        <taxon>Cyanophyceae</taxon>
        <taxon>Oscillatoriophycideae</taxon>
        <taxon>Oscillatoriales</taxon>
        <taxon>Microcoleaceae</taxon>
        <taxon>Trichodesmium</taxon>
    </lineage>
</organism>
<evidence type="ECO:0000255" key="1">
    <source>
        <dbReference type="HAMAP-Rule" id="MF_01611"/>
    </source>
</evidence>
<evidence type="ECO:0000255" key="2">
    <source>
        <dbReference type="PROSITE-ProRule" id="PRU01266"/>
    </source>
</evidence>
<name>COFG_TRIEI</name>
<accession>Q11A09</accession>
<keyword id="KW-0004">4Fe-4S</keyword>
<keyword id="KW-0408">Iron</keyword>
<keyword id="KW-0411">Iron-sulfur</keyword>
<keyword id="KW-0456">Lyase</keyword>
<keyword id="KW-0479">Metal-binding</keyword>
<keyword id="KW-0949">S-adenosyl-L-methionine</keyword>
<sequence>MSRIVTYSPAYTIVPTYECFNNCSYCNFRSDPGKSSWLSLSEAEKQLLSLKNKGTIEILTLSGEVHPNSKYRKAWFQLIYKLCQLALSLGFLPHTNVGILTRSEMEELKQVNVSMGLMLEQITPKLLKIVHKNSPSKIPHLRLQQLEWAGELRIPFTTGLLLGIGETVTDWKDTLEAISNIHQKWGHIQEVIIQPYSPGSENKWVSDGFNVNLLPEVIAIANEVLPSNITLQIPPNLVKKPEILLACLENGARDLGGIGPFDEINPDYPHPHYQALIKVLESRGWQLTKRLPVYSKYDDWLPINLKNIVSEWRIKLSIY</sequence>